<dbReference type="EC" id="6.1.1.10" evidence="1"/>
<dbReference type="EMBL" id="BA000037">
    <property type="protein sequence ID" value="BAC94023.1"/>
    <property type="molecule type" value="Genomic_DNA"/>
</dbReference>
<dbReference type="RefSeq" id="WP_011149956.1">
    <property type="nucleotide sequence ID" value="NC_005139.1"/>
</dbReference>
<dbReference type="SMR" id="Q7MM14"/>
<dbReference type="STRING" id="672.VV93_v1c11770"/>
<dbReference type="KEGG" id="vvy:VV1259"/>
<dbReference type="eggNOG" id="COG0073">
    <property type="taxonomic scope" value="Bacteria"/>
</dbReference>
<dbReference type="eggNOG" id="COG0143">
    <property type="taxonomic scope" value="Bacteria"/>
</dbReference>
<dbReference type="HOGENOM" id="CLU_009710_7_0_6"/>
<dbReference type="Proteomes" id="UP000002675">
    <property type="component" value="Chromosome I"/>
</dbReference>
<dbReference type="GO" id="GO:0005829">
    <property type="term" value="C:cytosol"/>
    <property type="evidence" value="ECO:0007669"/>
    <property type="project" value="TreeGrafter"/>
</dbReference>
<dbReference type="GO" id="GO:0005524">
    <property type="term" value="F:ATP binding"/>
    <property type="evidence" value="ECO:0007669"/>
    <property type="project" value="UniProtKB-UniRule"/>
</dbReference>
<dbReference type="GO" id="GO:0046872">
    <property type="term" value="F:metal ion binding"/>
    <property type="evidence" value="ECO:0007669"/>
    <property type="project" value="UniProtKB-KW"/>
</dbReference>
<dbReference type="GO" id="GO:0004825">
    <property type="term" value="F:methionine-tRNA ligase activity"/>
    <property type="evidence" value="ECO:0007669"/>
    <property type="project" value="UniProtKB-UniRule"/>
</dbReference>
<dbReference type="GO" id="GO:0000049">
    <property type="term" value="F:tRNA binding"/>
    <property type="evidence" value="ECO:0007669"/>
    <property type="project" value="UniProtKB-KW"/>
</dbReference>
<dbReference type="GO" id="GO:0006431">
    <property type="term" value="P:methionyl-tRNA aminoacylation"/>
    <property type="evidence" value="ECO:0007669"/>
    <property type="project" value="UniProtKB-UniRule"/>
</dbReference>
<dbReference type="CDD" id="cd07957">
    <property type="entry name" value="Anticodon_Ia_Met"/>
    <property type="match status" value="1"/>
</dbReference>
<dbReference type="CDD" id="cd00814">
    <property type="entry name" value="MetRS_core"/>
    <property type="match status" value="1"/>
</dbReference>
<dbReference type="CDD" id="cd02800">
    <property type="entry name" value="tRNA_bind_EcMetRS_like"/>
    <property type="match status" value="1"/>
</dbReference>
<dbReference type="FunFam" id="1.10.730.10:FF:000005">
    <property type="entry name" value="Methionine--tRNA ligase"/>
    <property type="match status" value="1"/>
</dbReference>
<dbReference type="FunFam" id="2.20.28.20:FF:000001">
    <property type="entry name" value="Methionine--tRNA ligase"/>
    <property type="match status" value="1"/>
</dbReference>
<dbReference type="FunFam" id="2.40.50.140:FF:000042">
    <property type="entry name" value="Methionine--tRNA ligase"/>
    <property type="match status" value="1"/>
</dbReference>
<dbReference type="Gene3D" id="3.40.50.620">
    <property type="entry name" value="HUPs"/>
    <property type="match status" value="1"/>
</dbReference>
<dbReference type="Gene3D" id="1.10.730.10">
    <property type="entry name" value="Isoleucyl-tRNA Synthetase, Domain 1"/>
    <property type="match status" value="1"/>
</dbReference>
<dbReference type="Gene3D" id="2.20.28.20">
    <property type="entry name" value="Methionyl-tRNA synthetase, Zn-domain"/>
    <property type="match status" value="1"/>
</dbReference>
<dbReference type="Gene3D" id="2.40.50.140">
    <property type="entry name" value="Nucleic acid-binding proteins"/>
    <property type="match status" value="1"/>
</dbReference>
<dbReference type="HAMAP" id="MF_00098">
    <property type="entry name" value="Met_tRNA_synth_type1"/>
    <property type="match status" value="1"/>
</dbReference>
<dbReference type="InterPro" id="IPR001412">
    <property type="entry name" value="aa-tRNA-synth_I_CS"/>
</dbReference>
<dbReference type="InterPro" id="IPR041872">
    <property type="entry name" value="Anticodon_Met"/>
</dbReference>
<dbReference type="InterPro" id="IPR004495">
    <property type="entry name" value="Met-tRNA-synth_bsu_C"/>
</dbReference>
<dbReference type="InterPro" id="IPR023458">
    <property type="entry name" value="Met-tRNA_ligase_1"/>
</dbReference>
<dbReference type="InterPro" id="IPR014758">
    <property type="entry name" value="Met-tRNA_synth"/>
</dbReference>
<dbReference type="InterPro" id="IPR015413">
    <property type="entry name" value="Methionyl/Leucyl_tRNA_Synth"/>
</dbReference>
<dbReference type="InterPro" id="IPR033911">
    <property type="entry name" value="MetRS_core"/>
</dbReference>
<dbReference type="InterPro" id="IPR029038">
    <property type="entry name" value="MetRS_Zn"/>
</dbReference>
<dbReference type="InterPro" id="IPR012340">
    <property type="entry name" value="NA-bd_OB-fold"/>
</dbReference>
<dbReference type="InterPro" id="IPR014729">
    <property type="entry name" value="Rossmann-like_a/b/a_fold"/>
</dbReference>
<dbReference type="InterPro" id="IPR002547">
    <property type="entry name" value="tRNA-bd_dom"/>
</dbReference>
<dbReference type="InterPro" id="IPR009080">
    <property type="entry name" value="tRNAsynth_Ia_anticodon-bd"/>
</dbReference>
<dbReference type="NCBIfam" id="TIGR00398">
    <property type="entry name" value="metG"/>
    <property type="match status" value="1"/>
</dbReference>
<dbReference type="NCBIfam" id="TIGR00399">
    <property type="entry name" value="metG_C_term"/>
    <property type="match status" value="1"/>
</dbReference>
<dbReference type="NCBIfam" id="NF001100">
    <property type="entry name" value="PRK00133.1"/>
    <property type="match status" value="1"/>
</dbReference>
<dbReference type="PANTHER" id="PTHR45765">
    <property type="entry name" value="METHIONINE--TRNA LIGASE"/>
    <property type="match status" value="1"/>
</dbReference>
<dbReference type="PANTHER" id="PTHR45765:SF1">
    <property type="entry name" value="METHIONINE--TRNA LIGASE, CYTOPLASMIC"/>
    <property type="match status" value="1"/>
</dbReference>
<dbReference type="Pfam" id="PF19303">
    <property type="entry name" value="Anticodon_3"/>
    <property type="match status" value="1"/>
</dbReference>
<dbReference type="Pfam" id="PF09334">
    <property type="entry name" value="tRNA-synt_1g"/>
    <property type="match status" value="1"/>
</dbReference>
<dbReference type="Pfam" id="PF01588">
    <property type="entry name" value="tRNA_bind"/>
    <property type="match status" value="1"/>
</dbReference>
<dbReference type="PRINTS" id="PR01041">
    <property type="entry name" value="TRNASYNTHMET"/>
</dbReference>
<dbReference type="SUPFAM" id="SSF47323">
    <property type="entry name" value="Anticodon-binding domain of a subclass of class I aminoacyl-tRNA synthetases"/>
    <property type="match status" value="1"/>
</dbReference>
<dbReference type="SUPFAM" id="SSF57770">
    <property type="entry name" value="Methionyl-tRNA synthetase (MetRS), Zn-domain"/>
    <property type="match status" value="1"/>
</dbReference>
<dbReference type="SUPFAM" id="SSF50249">
    <property type="entry name" value="Nucleic acid-binding proteins"/>
    <property type="match status" value="1"/>
</dbReference>
<dbReference type="SUPFAM" id="SSF52374">
    <property type="entry name" value="Nucleotidylyl transferase"/>
    <property type="match status" value="1"/>
</dbReference>
<dbReference type="PROSITE" id="PS00178">
    <property type="entry name" value="AA_TRNA_LIGASE_I"/>
    <property type="match status" value="1"/>
</dbReference>
<dbReference type="PROSITE" id="PS50886">
    <property type="entry name" value="TRBD"/>
    <property type="match status" value="1"/>
</dbReference>
<protein>
    <recommendedName>
        <fullName evidence="1">Methionine--tRNA ligase</fullName>
        <ecNumber evidence="1">6.1.1.10</ecNumber>
    </recommendedName>
    <alternativeName>
        <fullName evidence="1">Methionyl-tRNA synthetase</fullName>
        <shortName evidence="1">MetRS</shortName>
    </alternativeName>
</protein>
<reference key="1">
    <citation type="journal article" date="2003" name="Genome Res.">
        <title>Comparative genome analysis of Vibrio vulnificus, a marine pathogen.</title>
        <authorList>
            <person name="Chen C.-Y."/>
            <person name="Wu K.-M."/>
            <person name="Chang Y.-C."/>
            <person name="Chang C.-H."/>
            <person name="Tsai H.-C."/>
            <person name="Liao T.-L."/>
            <person name="Liu Y.-M."/>
            <person name="Chen H.-J."/>
            <person name="Shen A.B.-T."/>
            <person name="Li J.-C."/>
            <person name="Su T.-L."/>
            <person name="Shao C.-P."/>
            <person name="Lee C.-T."/>
            <person name="Hor L.-I."/>
            <person name="Tsai S.-F."/>
        </authorList>
    </citation>
    <scope>NUCLEOTIDE SEQUENCE [LARGE SCALE GENOMIC DNA]</scope>
    <source>
        <strain>YJ016</strain>
    </source>
</reference>
<evidence type="ECO:0000255" key="1">
    <source>
        <dbReference type="HAMAP-Rule" id="MF_00098"/>
    </source>
</evidence>
<name>SYM_VIBVY</name>
<feature type="chain" id="PRO_0000139173" description="Methionine--tRNA ligase">
    <location>
        <begin position="1"/>
        <end position="690"/>
    </location>
</feature>
<feature type="domain" description="tRNA-binding" evidence="1">
    <location>
        <begin position="589"/>
        <end position="690"/>
    </location>
</feature>
<feature type="short sequence motif" description="'HIGH' region">
    <location>
        <begin position="20"/>
        <end position="30"/>
    </location>
</feature>
<feature type="short sequence motif" description="'KMSKS' region">
    <location>
        <begin position="337"/>
        <end position="341"/>
    </location>
</feature>
<feature type="binding site" evidence="1">
    <location>
        <position position="151"/>
    </location>
    <ligand>
        <name>Zn(2+)</name>
        <dbReference type="ChEBI" id="CHEBI:29105"/>
    </ligand>
</feature>
<feature type="binding site" evidence="1">
    <location>
        <position position="154"/>
    </location>
    <ligand>
        <name>Zn(2+)</name>
        <dbReference type="ChEBI" id="CHEBI:29105"/>
    </ligand>
</feature>
<feature type="binding site" evidence="1">
    <location>
        <position position="164"/>
    </location>
    <ligand>
        <name>Zn(2+)</name>
        <dbReference type="ChEBI" id="CHEBI:29105"/>
    </ligand>
</feature>
<feature type="binding site" evidence="1">
    <location>
        <position position="167"/>
    </location>
    <ligand>
        <name>Zn(2+)</name>
        <dbReference type="ChEBI" id="CHEBI:29105"/>
    </ligand>
</feature>
<feature type="binding site" evidence="1">
    <location>
        <position position="340"/>
    </location>
    <ligand>
        <name>ATP</name>
        <dbReference type="ChEBI" id="CHEBI:30616"/>
    </ligand>
</feature>
<sequence length="690" mass="78120">MANDPRNFPQRKLLVTCALPYANGSIHLGHMLEHIQADIWVRYQRLRGNIVNFICADDAHGTPIMLKAQQMGMSPEEMIAAVSIEHQKDFAGFDISFDNYHSTHSDENRELASHIYLQLKKNGFISSRTISQLFDPEKEMFLPDRFVKGTCPKCKSEDQYGDNCDACGETYSPTELINPKSAVSGATPVMKDSEHFFFDLPQFESMLKEWTRSGSLQTETANKMQEWFESGLQQWDISRDAPYFGFEIPGEKDKFFYVWLDAPIGYMGSFKNLCDKRDDLDFDEYWNKDSKTELYHFIGKDIVYFHSLFWPAMLDGSGFRKPNNVFVHGYVTVNGAKMSKSKGTFVKASTYLEHLDPECLRYYYAAKLNSRIDDLDLNLEDFTQRVNADVVNKIVNLASRNAGFIAKRFEGKLAENFVEPELYNEFVAAADRIAELYEAREFGRAIREITALADKANQYVDEKAPWVVAKQEGKDQELQEICSVGINLFRVLMTYLKPVMPALAARTEAFLNEELTWEGVAQPLTAHEITAFKALFNRIDPKNIEAMIEASKEDAAAEMAAKEKAEASNAAQETELSKDPIAEEIEFDDFAKVDLRIAKIVSCESVPKADKLLKFQLDIGGEMRQVFSGIKAAYNPEDLVGKYTVVVANLKPRKMKFGMSEGMILAAGPGGKDLWILEPHEGAQPGMRVM</sequence>
<organism>
    <name type="scientific">Vibrio vulnificus (strain YJ016)</name>
    <dbReference type="NCBI Taxonomy" id="196600"/>
    <lineage>
        <taxon>Bacteria</taxon>
        <taxon>Pseudomonadati</taxon>
        <taxon>Pseudomonadota</taxon>
        <taxon>Gammaproteobacteria</taxon>
        <taxon>Vibrionales</taxon>
        <taxon>Vibrionaceae</taxon>
        <taxon>Vibrio</taxon>
    </lineage>
</organism>
<keyword id="KW-0030">Aminoacyl-tRNA synthetase</keyword>
<keyword id="KW-0067">ATP-binding</keyword>
<keyword id="KW-0963">Cytoplasm</keyword>
<keyword id="KW-0436">Ligase</keyword>
<keyword id="KW-0479">Metal-binding</keyword>
<keyword id="KW-0547">Nucleotide-binding</keyword>
<keyword id="KW-0648">Protein biosynthesis</keyword>
<keyword id="KW-0694">RNA-binding</keyword>
<keyword id="KW-0820">tRNA-binding</keyword>
<keyword id="KW-0862">Zinc</keyword>
<accession>Q7MM14</accession>
<gene>
    <name evidence="1" type="primary">metG</name>
    <name type="ordered locus">VV1259</name>
</gene>
<comment type="function">
    <text evidence="1">Is required not only for elongation of protein synthesis but also for the initiation of all mRNA translation through initiator tRNA(fMet) aminoacylation.</text>
</comment>
<comment type="catalytic activity">
    <reaction evidence="1">
        <text>tRNA(Met) + L-methionine + ATP = L-methionyl-tRNA(Met) + AMP + diphosphate</text>
        <dbReference type="Rhea" id="RHEA:13481"/>
        <dbReference type="Rhea" id="RHEA-COMP:9667"/>
        <dbReference type="Rhea" id="RHEA-COMP:9698"/>
        <dbReference type="ChEBI" id="CHEBI:30616"/>
        <dbReference type="ChEBI" id="CHEBI:33019"/>
        <dbReference type="ChEBI" id="CHEBI:57844"/>
        <dbReference type="ChEBI" id="CHEBI:78442"/>
        <dbReference type="ChEBI" id="CHEBI:78530"/>
        <dbReference type="ChEBI" id="CHEBI:456215"/>
        <dbReference type="EC" id="6.1.1.10"/>
    </reaction>
</comment>
<comment type="cofactor">
    <cofactor evidence="1">
        <name>Zn(2+)</name>
        <dbReference type="ChEBI" id="CHEBI:29105"/>
    </cofactor>
    <text evidence="1">Binds 1 zinc ion per subunit.</text>
</comment>
<comment type="subunit">
    <text evidence="1">Homodimer.</text>
</comment>
<comment type="subcellular location">
    <subcellularLocation>
        <location evidence="1">Cytoplasm</location>
    </subcellularLocation>
</comment>
<comment type="similarity">
    <text evidence="1">Belongs to the class-I aminoacyl-tRNA synthetase family. MetG type 1 subfamily.</text>
</comment>
<proteinExistence type="inferred from homology"/>